<reference key="1">
    <citation type="journal article" date="2004" name="Nature">
        <title>Genome evolution in yeasts.</title>
        <authorList>
            <person name="Dujon B."/>
            <person name="Sherman D."/>
            <person name="Fischer G."/>
            <person name="Durrens P."/>
            <person name="Casaregola S."/>
            <person name="Lafontaine I."/>
            <person name="de Montigny J."/>
            <person name="Marck C."/>
            <person name="Neuveglise C."/>
            <person name="Talla E."/>
            <person name="Goffard N."/>
            <person name="Frangeul L."/>
            <person name="Aigle M."/>
            <person name="Anthouard V."/>
            <person name="Babour A."/>
            <person name="Barbe V."/>
            <person name="Barnay S."/>
            <person name="Blanchin S."/>
            <person name="Beckerich J.-M."/>
            <person name="Beyne E."/>
            <person name="Bleykasten C."/>
            <person name="Boisrame A."/>
            <person name="Boyer J."/>
            <person name="Cattolico L."/>
            <person name="Confanioleri F."/>
            <person name="de Daruvar A."/>
            <person name="Despons L."/>
            <person name="Fabre E."/>
            <person name="Fairhead C."/>
            <person name="Ferry-Dumazet H."/>
            <person name="Groppi A."/>
            <person name="Hantraye F."/>
            <person name="Hennequin C."/>
            <person name="Jauniaux N."/>
            <person name="Joyet P."/>
            <person name="Kachouri R."/>
            <person name="Kerrest A."/>
            <person name="Koszul R."/>
            <person name="Lemaire M."/>
            <person name="Lesur I."/>
            <person name="Ma L."/>
            <person name="Muller H."/>
            <person name="Nicaud J.-M."/>
            <person name="Nikolski M."/>
            <person name="Oztas S."/>
            <person name="Ozier-Kalogeropoulos O."/>
            <person name="Pellenz S."/>
            <person name="Potier S."/>
            <person name="Richard G.-F."/>
            <person name="Straub M.-L."/>
            <person name="Suleau A."/>
            <person name="Swennen D."/>
            <person name="Tekaia F."/>
            <person name="Wesolowski-Louvel M."/>
            <person name="Westhof E."/>
            <person name="Wirth B."/>
            <person name="Zeniou-Meyer M."/>
            <person name="Zivanovic Y."/>
            <person name="Bolotin-Fukuhara M."/>
            <person name="Thierry A."/>
            <person name="Bouchier C."/>
            <person name="Caudron B."/>
            <person name="Scarpelli C."/>
            <person name="Gaillardin C."/>
            <person name="Weissenbach J."/>
            <person name="Wincker P."/>
            <person name="Souciet J.-L."/>
        </authorList>
    </citation>
    <scope>NUCLEOTIDE SEQUENCE [LARGE SCALE GENOMIC DNA]</scope>
    <source>
        <strain>ATCC 2001 / BCRC 20586 / JCM 3761 / NBRC 0622 / NRRL Y-65 / CBS 138</strain>
    </source>
</reference>
<evidence type="ECO:0000250" key="1">
    <source>
        <dbReference type="UniProtKB" id="Q04119"/>
    </source>
</evidence>
<evidence type="ECO:0000255" key="2"/>
<evidence type="ECO:0000256" key="3">
    <source>
        <dbReference type="SAM" id="MobiDB-lite"/>
    </source>
</evidence>
<evidence type="ECO:0000305" key="4"/>
<gene>
    <name type="primary">PPN1</name>
    <name type="ordered locus">CAGL0K06237g</name>
</gene>
<sequence length="663" mass="76352">MAVNEKDVGRKSRVSVVLWVFIALGTLFLCKNAFTFSSESIHGLKISSDDSDSVDIERQISLGLTPRKPVVITDLRTGNKRKLHGRFLHITDMHPDEYYVAGTSIDNVCHSGEPTKGKDRAAKFGNAMSGCDSPMLLMDMTLDWIDKNLKDQIDFVVWTGDNIRHDNDRTYPRTEDEIFRMNAEVAEKIKKIFRTPNSPDPRDFAVPVVPSIGNNDVFPHNLFSLGPTLQTREYYRLWGDFIPEEQQRMFDRDASFFTEVIPGKLAVLSFNTLYLFKANPLVDNCDSRKQPGYQLLLWLGYVLDEIRERGMKVWISGHVPPIAKNYDSSCYDKFSLWMHEYRDVIIGGLYGHMNMDHFVPVDVQAIRENMEEQQMSLLSEDERLTKTIREHAIAAREAHLMGAKPVNKESYLDGVLDTYYKGVLQEIEQAVDSDLDIEKKKKKKGKKKKGKKEKRTLEEIYDQHSIVQVSGSVIPTFNPSIRVWEYNISDITDSSSIFGENQLEYQSWDLFFEDLEHKMKNEFDDNESSFWAASAEQNKKKKKKNGKPDKSIPRKKPDELPAGPGHIQQLFSPTKFVQYFADLDSINSEYEKLIDKGLAEHDAINKAFNYEVEYTSKDEPYPMESLLVKDYLHLAADLARDNGLWKIFKERAFISTGYEDERN</sequence>
<name>PPN1_CANGA</name>
<feature type="chain" id="PRO_0000058544" description="Endopolyphosphatase">
    <location>
        <begin position="1"/>
        <end position="663"/>
    </location>
</feature>
<feature type="topological domain" description="Cytoplasmic" evidence="2">
    <location>
        <begin position="1"/>
        <end position="14"/>
    </location>
</feature>
<feature type="transmembrane region" description="Helical; Signal-anchor for type II membrane protein" evidence="2">
    <location>
        <begin position="15"/>
        <end position="35"/>
    </location>
</feature>
<feature type="topological domain" description="Vacuolar" evidence="2">
    <location>
        <begin position="36"/>
        <end position="663"/>
    </location>
</feature>
<feature type="region of interest" description="Disordered" evidence="3">
    <location>
        <begin position="534"/>
        <end position="564"/>
    </location>
</feature>
<feature type="compositionally biased region" description="Basic and acidic residues" evidence="3">
    <location>
        <begin position="546"/>
        <end position="559"/>
    </location>
</feature>
<feature type="glycosylation site" description="N-linked (GlcNAc...) asparagine" evidence="2">
    <location>
        <position position="487"/>
    </location>
</feature>
<feature type="glycosylation site" description="N-linked (GlcNAc...) asparagine" evidence="2">
    <location>
        <position position="526"/>
    </location>
</feature>
<dbReference type="EC" id="3.6.1.10"/>
<dbReference type="EMBL" id="CR380957">
    <property type="protein sequence ID" value="CAG61455.1"/>
    <property type="molecule type" value="Genomic_DNA"/>
</dbReference>
<dbReference type="RefSeq" id="XP_448494.1">
    <property type="nucleotide sequence ID" value="XM_448494.1"/>
</dbReference>
<dbReference type="SMR" id="Q6FMQ0"/>
<dbReference type="FunCoup" id="Q6FMQ0">
    <property type="interactions" value="281"/>
</dbReference>
<dbReference type="STRING" id="284593.Q6FMQ0"/>
<dbReference type="GlyCosmos" id="Q6FMQ0">
    <property type="glycosylation" value="2 sites, No reported glycans"/>
</dbReference>
<dbReference type="EnsemblFungi" id="CAGL0K06237g-T">
    <property type="protein sequence ID" value="CAGL0K06237g-T-p1"/>
    <property type="gene ID" value="CAGL0K06237g"/>
</dbReference>
<dbReference type="KEGG" id="cgr:2890459"/>
<dbReference type="CGD" id="CAL0134089">
    <property type="gene designation" value="CAGL0K06237g"/>
</dbReference>
<dbReference type="VEuPathDB" id="FungiDB:CAGL0K06237g"/>
<dbReference type="eggNOG" id="KOG3770">
    <property type="taxonomic scope" value="Eukaryota"/>
</dbReference>
<dbReference type="HOGENOM" id="CLU_013424_1_0_1"/>
<dbReference type="InParanoid" id="Q6FMQ0"/>
<dbReference type="OMA" id="WAERYSV"/>
<dbReference type="Proteomes" id="UP000002428">
    <property type="component" value="Chromosome K"/>
</dbReference>
<dbReference type="GO" id="GO:0005829">
    <property type="term" value="C:cytosol"/>
    <property type="evidence" value="ECO:0007669"/>
    <property type="project" value="EnsemblFungi"/>
</dbReference>
<dbReference type="GO" id="GO:0000329">
    <property type="term" value="C:fungal-type vacuole membrane"/>
    <property type="evidence" value="ECO:0007669"/>
    <property type="project" value="EnsemblFungi"/>
</dbReference>
<dbReference type="GO" id="GO:0005634">
    <property type="term" value="C:nucleus"/>
    <property type="evidence" value="ECO:0007669"/>
    <property type="project" value="EnsemblFungi"/>
</dbReference>
<dbReference type="GO" id="GO:0000298">
    <property type="term" value="F:endopolyphosphatase activity"/>
    <property type="evidence" value="ECO:0007669"/>
    <property type="project" value="UniProtKB-EC"/>
</dbReference>
<dbReference type="GO" id="GO:0004309">
    <property type="term" value="F:exopolyphosphatase activity"/>
    <property type="evidence" value="ECO:0007669"/>
    <property type="project" value="EnsemblFungi"/>
</dbReference>
<dbReference type="GO" id="GO:0008081">
    <property type="term" value="F:phosphoric diester hydrolase activity"/>
    <property type="evidence" value="ECO:0007669"/>
    <property type="project" value="TreeGrafter"/>
</dbReference>
<dbReference type="GO" id="GO:0006798">
    <property type="term" value="P:polyphosphate catabolic process"/>
    <property type="evidence" value="ECO:0007669"/>
    <property type="project" value="EnsemblFungi"/>
</dbReference>
<dbReference type="CDD" id="cd00842">
    <property type="entry name" value="MPP_ASMase"/>
    <property type="match status" value="1"/>
</dbReference>
<dbReference type="InterPro" id="IPR041805">
    <property type="entry name" value="ASMase/PPN1_MPP"/>
</dbReference>
<dbReference type="InterPro" id="IPR004843">
    <property type="entry name" value="Calcineurin-like_PHP_ApaH"/>
</dbReference>
<dbReference type="InterPro" id="IPR012358">
    <property type="entry name" value="EndopolyPtase_N1"/>
</dbReference>
<dbReference type="InterPro" id="IPR029052">
    <property type="entry name" value="Metallo-depent_PP-like"/>
</dbReference>
<dbReference type="PANTHER" id="PTHR10340:SF55">
    <property type="entry name" value="ENDOPOLYPHOSPHATASE"/>
    <property type="match status" value="1"/>
</dbReference>
<dbReference type="PANTHER" id="PTHR10340">
    <property type="entry name" value="SPHINGOMYELIN PHOSPHODIESTERASE"/>
    <property type="match status" value="1"/>
</dbReference>
<dbReference type="Pfam" id="PF00149">
    <property type="entry name" value="Metallophos"/>
    <property type="match status" value="1"/>
</dbReference>
<dbReference type="PIRSF" id="PIRSF027093">
    <property type="entry name" value="EndopolyPtase_N1"/>
    <property type="match status" value="1"/>
</dbReference>
<dbReference type="SUPFAM" id="SSF56300">
    <property type="entry name" value="Metallo-dependent phosphatases"/>
    <property type="match status" value="1"/>
</dbReference>
<proteinExistence type="inferred from homology"/>
<comment type="function">
    <text evidence="1">Catalyzes the hydrolysis of inorganic polyphosphate (polyP) chains of many hundreds of phosphate residues into shorter lengths.</text>
</comment>
<comment type="catalytic activity">
    <reaction evidence="1">
        <text>[phosphate](n+1) + n H2O = (n+1) phosphate + n H(+)</text>
        <dbReference type="Rhea" id="RHEA:22452"/>
        <dbReference type="Rhea" id="RHEA-COMP:14280"/>
        <dbReference type="ChEBI" id="CHEBI:15377"/>
        <dbReference type="ChEBI" id="CHEBI:15378"/>
        <dbReference type="ChEBI" id="CHEBI:16838"/>
        <dbReference type="ChEBI" id="CHEBI:43474"/>
        <dbReference type="EC" id="3.6.1.10"/>
    </reaction>
</comment>
<comment type="cofactor">
    <cofactor evidence="1">
        <name>a divalent metal cation</name>
        <dbReference type="ChEBI" id="CHEBI:60240"/>
    </cofactor>
</comment>
<comment type="subcellular location">
    <subcellularLocation>
        <location evidence="1">Vacuole membrane</location>
        <topology evidence="1">Single-pass type II membrane protein</topology>
    </subcellularLocation>
</comment>
<comment type="PTM">
    <text evidence="1">Processing by proteases in the vacuole may be required for activation.</text>
</comment>
<comment type="similarity">
    <text evidence="4">Belongs to the endopolyphosphatase PPN1 family.</text>
</comment>
<accession>Q6FMQ0</accession>
<protein>
    <recommendedName>
        <fullName>Endopolyphosphatase</fullName>
        <ecNumber>3.6.1.10</ecNumber>
    </recommendedName>
</protein>
<keyword id="KW-0325">Glycoprotein</keyword>
<keyword id="KW-0378">Hydrolase</keyword>
<keyword id="KW-0472">Membrane</keyword>
<keyword id="KW-1185">Reference proteome</keyword>
<keyword id="KW-0735">Signal-anchor</keyword>
<keyword id="KW-0812">Transmembrane</keyword>
<keyword id="KW-1133">Transmembrane helix</keyword>
<keyword id="KW-0926">Vacuole</keyword>
<organism>
    <name type="scientific">Candida glabrata (strain ATCC 2001 / BCRC 20586 / JCM 3761 / NBRC 0622 / NRRL Y-65 / CBS 138)</name>
    <name type="common">Yeast</name>
    <name type="synonym">Nakaseomyces glabratus</name>
    <dbReference type="NCBI Taxonomy" id="284593"/>
    <lineage>
        <taxon>Eukaryota</taxon>
        <taxon>Fungi</taxon>
        <taxon>Dikarya</taxon>
        <taxon>Ascomycota</taxon>
        <taxon>Saccharomycotina</taxon>
        <taxon>Saccharomycetes</taxon>
        <taxon>Saccharomycetales</taxon>
        <taxon>Saccharomycetaceae</taxon>
        <taxon>Nakaseomyces</taxon>
    </lineage>
</organism>